<comment type="function">
    <text evidence="1">Involved in mRNA degradation. Catalyzes the phosphorolysis of single-stranded polyribonucleotides processively in the 3'- to 5'-direction.</text>
</comment>
<comment type="catalytic activity">
    <reaction evidence="1">
        <text>RNA(n+1) + phosphate = RNA(n) + a ribonucleoside 5'-diphosphate</text>
        <dbReference type="Rhea" id="RHEA:22096"/>
        <dbReference type="Rhea" id="RHEA-COMP:14527"/>
        <dbReference type="Rhea" id="RHEA-COMP:17342"/>
        <dbReference type="ChEBI" id="CHEBI:43474"/>
        <dbReference type="ChEBI" id="CHEBI:57930"/>
        <dbReference type="ChEBI" id="CHEBI:140395"/>
        <dbReference type="EC" id="2.7.7.8"/>
    </reaction>
</comment>
<comment type="cofactor">
    <cofactor evidence="1">
        <name>Mg(2+)</name>
        <dbReference type="ChEBI" id="CHEBI:18420"/>
    </cofactor>
</comment>
<comment type="subunit">
    <text evidence="1">Component of the RNA degradosome, which is a multiprotein complex involved in RNA processing and mRNA degradation.</text>
</comment>
<comment type="subcellular location">
    <subcellularLocation>
        <location evidence="1">Cytoplasm</location>
    </subcellularLocation>
</comment>
<comment type="similarity">
    <text evidence="1">Belongs to the polyribonucleotide nucleotidyltransferase family.</text>
</comment>
<proteinExistence type="inferred from homology"/>
<evidence type="ECO:0000255" key="1">
    <source>
        <dbReference type="HAMAP-Rule" id="MF_01595"/>
    </source>
</evidence>
<sequence>MKIFREVFELGNKEIILETGGMARQADGSVTVSCGNNVVLVTTVVKKSVADGTDFFPLSVHYLEKTYAAGKIPGGFLRREGRPSEEQILISRLIDRSIRPSFPDGFFNEIQIVATVLSYDGAFSPDILALIGASASLAISGAPYDDVVAGVRVGYTNGKYILNPNKQDLRDSDLDLVVSGTDDAILMVESEANSLPESVMLGGILYAHKHLKTIINSINRLAKVASKPRIEYSIYQINKFLKSQIKSQFFGEIKNAYTIASKQERNLKLNAIRKNVLEYIFSSDVDGNEYTEKEILEAFHDIEKDLVRSNILEGKPRIDGRCTETIRPINVKIGVLPGVHGSALFTRGETQALVVTTLGSDRDAQLVESLDGIEKCRYMLHYNFPPYSVGECGMVGMAPKRREIGHANLAKRATQAVFPNEEAYPYVVRVVSEILESNGSSSMATVCGSSLSMMDAGVPIAEPVAGIAMGLIKDGAKYAVLSDILGDEDHLGDMDFKVAGTRYGVTALQMDIKIKGISREILEQALEQARVGRLHILGIMNEVIKEHKEAVSDVAPQIHVMNINPAKIKDVVGRGGATVKGIVEKTGAQIDTSDSGEVKVFAKDKKSMDMAVAMIEEIVAEVEEGQVYKGKIVKLLDSGVFVNLLGSQDGYLPFSEIEQAGMKTNSLVEGQGLEVLVQNIDRGGRVKLSLVAR</sequence>
<reference key="1">
    <citation type="journal article" date="2007" name="Genome Biol.">
        <title>Comparison of Francisella tularensis genomes reveals evolutionary events associated with the emergence of human pathogenic strains.</title>
        <authorList>
            <person name="Rohmer L."/>
            <person name="Fong C."/>
            <person name="Abmayr S."/>
            <person name="Wasnick M."/>
            <person name="Larson Freeman T.J."/>
            <person name="Radey M."/>
            <person name="Guina T."/>
            <person name="Svensson K."/>
            <person name="Hayden H.S."/>
            <person name="Jacobs M."/>
            <person name="Gallagher L.A."/>
            <person name="Manoil C."/>
            <person name="Ernst R.K."/>
            <person name="Drees B."/>
            <person name="Buckley D."/>
            <person name="Haugen E."/>
            <person name="Bovee D."/>
            <person name="Zhou Y."/>
            <person name="Chang J."/>
            <person name="Levy R."/>
            <person name="Lim R."/>
            <person name="Gillett W."/>
            <person name="Guenthener D."/>
            <person name="Kang A."/>
            <person name="Shaffer S.A."/>
            <person name="Taylor G."/>
            <person name="Chen J."/>
            <person name="Gallis B."/>
            <person name="D'Argenio D.A."/>
            <person name="Forsman M."/>
            <person name="Olson M.V."/>
            <person name="Goodlett D.R."/>
            <person name="Kaul R."/>
            <person name="Miller S.I."/>
            <person name="Brittnacher M.J."/>
        </authorList>
    </citation>
    <scope>NUCLEOTIDE SEQUENCE [LARGE SCALE GENOMIC DNA]</scope>
    <source>
        <strain>U112</strain>
    </source>
</reference>
<keyword id="KW-0963">Cytoplasm</keyword>
<keyword id="KW-0460">Magnesium</keyword>
<keyword id="KW-0479">Metal-binding</keyword>
<keyword id="KW-0548">Nucleotidyltransferase</keyword>
<keyword id="KW-0694">RNA-binding</keyword>
<keyword id="KW-0808">Transferase</keyword>
<feature type="chain" id="PRO_0000329652" description="Polyribonucleotide nucleotidyltransferase">
    <location>
        <begin position="1"/>
        <end position="693"/>
    </location>
</feature>
<feature type="domain" description="KH" evidence="1">
    <location>
        <begin position="556"/>
        <end position="615"/>
    </location>
</feature>
<feature type="domain" description="S1 motif" evidence="1">
    <location>
        <begin position="625"/>
        <end position="693"/>
    </location>
</feature>
<feature type="binding site" evidence="1">
    <location>
        <position position="489"/>
    </location>
    <ligand>
        <name>Mg(2+)</name>
        <dbReference type="ChEBI" id="CHEBI:18420"/>
    </ligand>
</feature>
<feature type="binding site" evidence="1">
    <location>
        <position position="495"/>
    </location>
    <ligand>
        <name>Mg(2+)</name>
        <dbReference type="ChEBI" id="CHEBI:18420"/>
    </ligand>
</feature>
<accession>A0Q5I9</accession>
<name>PNP_FRATN</name>
<dbReference type="EC" id="2.7.7.8" evidence="1"/>
<dbReference type="EMBL" id="CP000439">
    <property type="protein sequence ID" value="ABK89504.1"/>
    <property type="molecule type" value="Genomic_DNA"/>
</dbReference>
<dbReference type="RefSeq" id="WP_003033387.1">
    <property type="nucleotide sequence ID" value="NZ_CP009633.1"/>
</dbReference>
<dbReference type="SMR" id="A0Q5I9"/>
<dbReference type="GeneID" id="75263906"/>
<dbReference type="KEGG" id="ftn:FTN_0609"/>
<dbReference type="KEGG" id="ftx:AW25_1419"/>
<dbReference type="BioCyc" id="FTUL401614:G1G75-634-MONOMER"/>
<dbReference type="Proteomes" id="UP000000762">
    <property type="component" value="Chromosome"/>
</dbReference>
<dbReference type="GO" id="GO:0005829">
    <property type="term" value="C:cytosol"/>
    <property type="evidence" value="ECO:0007669"/>
    <property type="project" value="TreeGrafter"/>
</dbReference>
<dbReference type="GO" id="GO:0000175">
    <property type="term" value="F:3'-5'-RNA exonuclease activity"/>
    <property type="evidence" value="ECO:0007669"/>
    <property type="project" value="TreeGrafter"/>
</dbReference>
<dbReference type="GO" id="GO:0000287">
    <property type="term" value="F:magnesium ion binding"/>
    <property type="evidence" value="ECO:0007669"/>
    <property type="project" value="UniProtKB-UniRule"/>
</dbReference>
<dbReference type="GO" id="GO:0004654">
    <property type="term" value="F:polyribonucleotide nucleotidyltransferase activity"/>
    <property type="evidence" value="ECO:0007669"/>
    <property type="project" value="UniProtKB-UniRule"/>
</dbReference>
<dbReference type="GO" id="GO:0003723">
    <property type="term" value="F:RNA binding"/>
    <property type="evidence" value="ECO:0007669"/>
    <property type="project" value="UniProtKB-UniRule"/>
</dbReference>
<dbReference type="GO" id="GO:0006402">
    <property type="term" value="P:mRNA catabolic process"/>
    <property type="evidence" value="ECO:0007669"/>
    <property type="project" value="UniProtKB-UniRule"/>
</dbReference>
<dbReference type="GO" id="GO:0006396">
    <property type="term" value="P:RNA processing"/>
    <property type="evidence" value="ECO:0007669"/>
    <property type="project" value="InterPro"/>
</dbReference>
<dbReference type="CDD" id="cd02393">
    <property type="entry name" value="KH-I_PNPase"/>
    <property type="match status" value="1"/>
</dbReference>
<dbReference type="CDD" id="cd11364">
    <property type="entry name" value="RNase_PH_PNPase_2"/>
    <property type="match status" value="1"/>
</dbReference>
<dbReference type="FunFam" id="3.30.1370.10:FF:000001">
    <property type="entry name" value="Polyribonucleotide nucleotidyltransferase"/>
    <property type="match status" value="1"/>
</dbReference>
<dbReference type="FunFam" id="3.30.230.70:FF:000001">
    <property type="entry name" value="Polyribonucleotide nucleotidyltransferase"/>
    <property type="match status" value="1"/>
</dbReference>
<dbReference type="FunFam" id="3.30.230.70:FF:000002">
    <property type="entry name" value="Polyribonucleotide nucleotidyltransferase"/>
    <property type="match status" value="1"/>
</dbReference>
<dbReference type="Gene3D" id="3.30.230.70">
    <property type="entry name" value="GHMP Kinase, N-terminal domain"/>
    <property type="match status" value="2"/>
</dbReference>
<dbReference type="Gene3D" id="3.30.1370.10">
    <property type="entry name" value="K Homology domain, type 1"/>
    <property type="match status" value="1"/>
</dbReference>
<dbReference type="Gene3D" id="2.40.50.140">
    <property type="entry name" value="Nucleic acid-binding proteins"/>
    <property type="match status" value="1"/>
</dbReference>
<dbReference type="HAMAP" id="MF_01595">
    <property type="entry name" value="PNPase"/>
    <property type="match status" value="1"/>
</dbReference>
<dbReference type="InterPro" id="IPR001247">
    <property type="entry name" value="ExoRNase_PH_dom1"/>
</dbReference>
<dbReference type="InterPro" id="IPR015847">
    <property type="entry name" value="ExoRNase_PH_dom2"/>
</dbReference>
<dbReference type="InterPro" id="IPR036345">
    <property type="entry name" value="ExoRNase_PH_dom2_sf"/>
</dbReference>
<dbReference type="InterPro" id="IPR004087">
    <property type="entry name" value="KH_dom"/>
</dbReference>
<dbReference type="InterPro" id="IPR004088">
    <property type="entry name" value="KH_dom_type_1"/>
</dbReference>
<dbReference type="InterPro" id="IPR036612">
    <property type="entry name" value="KH_dom_type_1_sf"/>
</dbReference>
<dbReference type="InterPro" id="IPR012340">
    <property type="entry name" value="NA-bd_OB-fold"/>
</dbReference>
<dbReference type="InterPro" id="IPR012162">
    <property type="entry name" value="PNPase"/>
</dbReference>
<dbReference type="InterPro" id="IPR027408">
    <property type="entry name" value="PNPase/RNase_PH_dom_sf"/>
</dbReference>
<dbReference type="InterPro" id="IPR015848">
    <property type="entry name" value="PNPase_PH_RNA-bd_bac/org-type"/>
</dbReference>
<dbReference type="InterPro" id="IPR036456">
    <property type="entry name" value="PNPase_PH_RNA-bd_sf"/>
</dbReference>
<dbReference type="InterPro" id="IPR020568">
    <property type="entry name" value="Ribosomal_Su5_D2-typ_SF"/>
</dbReference>
<dbReference type="InterPro" id="IPR003029">
    <property type="entry name" value="S1_domain"/>
</dbReference>
<dbReference type="NCBIfam" id="TIGR03591">
    <property type="entry name" value="polynuc_phos"/>
    <property type="match status" value="1"/>
</dbReference>
<dbReference type="NCBIfam" id="NF008805">
    <property type="entry name" value="PRK11824.1"/>
    <property type="match status" value="1"/>
</dbReference>
<dbReference type="PANTHER" id="PTHR11252">
    <property type="entry name" value="POLYRIBONUCLEOTIDE NUCLEOTIDYLTRANSFERASE"/>
    <property type="match status" value="1"/>
</dbReference>
<dbReference type="PANTHER" id="PTHR11252:SF0">
    <property type="entry name" value="POLYRIBONUCLEOTIDE NUCLEOTIDYLTRANSFERASE 1, MITOCHONDRIAL"/>
    <property type="match status" value="1"/>
</dbReference>
<dbReference type="Pfam" id="PF00013">
    <property type="entry name" value="KH_1"/>
    <property type="match status" value="1"/>
</dbReference>
<dbReference type="Pfam" id="PF03726">
    <property type="entry name" value="PNPase"/>
    <property type="match status" value="1"/>
</dbReference>
<dbReference type="Pfam" id="PF01138">
    <property type="entry name" value="RNase_PH"/>
    <property type="match status" value="2"/>
</dbReference>
<dbReference type="Pfam" id="PF03725">
    <property type="entry name" value="RNase_PH_C"/>
    <property type="match status" value="2"/>
</dbReference>
<dbReference type="Pfam" id="PF00575">
    <property type="entry name" value="S1"/>
    <property type="match status" value="1"/>
</dbReference>
<dbReference type="PIRSF" id="PIRSF005499">
    <property type="entry name" value="PNPase"/>
    <property type="match status" value="1"/>
</dbReference>
<dbReference type="SMART" id="SM00322">
    <property type="entry name" value="KH"/>
    <property type="match status" value="1"/>
</dbReference>
<dbReference type="SMART" id="SM00316">
    <property type="entry name" value="S1"/>
    <property type="match status" value="1"/>
</dbReference>
<dbReference type="SUPFAM" id="SSF54791">
    <property type="entry name" value="Eukaryotic type KH-domain (KH-domain type I)"/>
    <property type="match status" value="1"/>
</dbReference>
<dbReference type="SUPFAM" id="SSF50249">
    <property type="entry name" value="Nucleic acid-binding proteins"/>
    <property type="match status" value="1"/>
</dbReference>
<dbReference type="SUPFAM" id="SSF46915">
    <property type="entry name" value="Polynucleotide phosphorylase/guanosine pentaphosphate synthase (PNPase/GPSI), domain 3"/>
    <property type="match status" value="1"/>
</dbReference>
<dbReference type="SUPFAM" id="SSF55666">
    <property type="entry name" value="Ribonuclease PH domain 2-like"/>
    <property type="match status" value="2"/>
</dbReference>
<dbReference type="SUPFAM" id="SSF54211">
    <property type="entry name" value="Ribosomal protein S5 domain 2-like"/>
    <property type="match status" value="2"/>
</dbReference>
<dbReference type="PROSITE" id="PS50084">
    <property type="entry name" value="KH_TYPE_1"/>
    <property type="match status" value="1"/>
</dbReference>
<dbReference type="PROSITE" id="PS50126">
    <property type="entry name" value="S1"/>
    <property type="match status" value="1"/>
</dbReference>
<organism>
    <name type="scientific">Francisella tularensis subsp. novicida (strain U112)</name>
    <dbReference type="NCBI Taxonomy" id="401614"/>
    <lineage>
        <taxon>Bacteria</taxon>
        <taxon>Pseudomonadati</taxon>
        <taxon>Pseudomonadota</taxon>
        <taxon>Gammaproteobacteria</taxon>
        <taxon>Thiotrichales</taxon>
        <taxon>Francisellaceae</taxon>
        <taxon>Francisella</taxon>
    </lineage>
</organism>
<protein>
    <recommendedName>
        <fullName evidence="1">Polyribonucleotide nucleotidyltransferase</fullName>
        <ecNumber evidence="1">2.7.7.8</ecNumber>
    </recommendedName>
    <alternativeName>
        <fullName evidence="1">Polynucleotide phosphorylase</fullName>
        <shortName evidence="1">PNPase</shortName>
    </alternativeName>
</protein>
<gene>
    <name evidence="1" type="primary">pnp</name>
    <name type="ordered locus">FTN_0609</name>
</gene>